<feature type="chain" id="PRO_1000044763" description="Uronate isomerase">
    <location>
        <begin position="1"/>
        <end position="464"/>
    </location>
</feature>
<evidence type="ECO:0000255" key="1">
    <source>
        <dbReference type="HAMAP-Rule" id="MF_00675"/>
    </source>
</evidence>
<reference key="1">
    <citation type="submission" date="2007-04" db="EMBL/GenBank/DDBJ databases">
        <title>Genome sequence of the thermophilic hydrogen-producing bacterium Caldicellulosiruptor saccharolyticus DSM 8903.</title>
        <authorList>
            <person name="Copeland A."/>
            <person name="Lucas S."/>
            <person name="Lapidus A."/>
            <person name="Barry K."/>
            <person name="Detter J.C."/>
            <person name="Glavina del Rio T."/>
            <person name="Hammon N."/>
            <person name="Israni S."/>
            <person name="Dalin E."/>
            <person name="Tice H."/>
            <person name="Pitluck S."/>
            <person name="Kiss H."/>
            <person name="Brettin T."/>
            <person name="Bruce D."/>
            <person name="Han C."/>
            <person name="Schmutz J."/>
            <person name="Larimer F."/>
            <person name="Land M."/>
            <person name="Hauser L."/>
            <person name="Kyrpides N."/>
            <person name="Lykidis A."/>
            <person name="van de Werken H.J.G."/>
            <person name="Verhaart M.R.A."/>
            <person name="VanFossen A.L."/>
            <person name="Lewis D.L."/>
            <person name="Nichols J.D."/>
            <person name="Goorissen H.P."/>
            <person name="van Niel E.W.J."/>
            <person name="Stams F.J.M."/>
            <person name="Willquist K.U."/>
            <person name="Ward D.E."/>
            <person name="van der Oost J."/>
            <person name="Kelly R.M."/>
            <person name="Kengen S.M.W."/>
            <person name="Richardson P."/>
        </authorList>
    </citation>
    <scope>NUCLEOTIDE SEQUENCE [LARGE SCALE GENOMIC DNA]</scope>
    <source>
        <strain>ATCC 43494 / DSM 8903 / Tp8T 6331</strain>
    </source>
</reference>
<proteinExistence type="inferred from homology"/>
<protein>
    <recommendedName>
        <fullName evidence="1">Uronate isomerase</fullName>
        <ecNumber evidence="1">5.3.1.12</ecNumber>
    </recommendedName>
    <alternativeName>
        <fullName evidence="1">Glucuronate isomerase</fullName>
    </alternativeName>
    <alternativeName>
        <fullName evidence="1">Uronic isomerase</fullName>
    </alternativeName>
</protein>
<dbReference type="EC" id="5.3.1.12" evidence="1"/>
<dbReference type="EMBL" id="CP000679">
    <property type="protein sequence ID" value="ABP67534.1"/>
    <property type="molecule type" value="Genomic_DNA"/>
</dbReference>
<dbReference type="RefSeq" id="WP_011917470.1">
    <property type="nucleotide sequence ID" value="NC_009437.1"/>
</dbReference>
<dbReference type="SMR" id="A4XKU9"/>
<dbReference type="STRING" id="351627.Csac_1949"/>
<dbReference type="KEGG" id="csc:Csac_1949"/>
<dbReference type="eggNOG" id="COG1904">
    <property type="taxonomic scope" value="Bacteria"/>
</dbReference>
<dbReference type="HOGENOM" id="CLU_044465_1_0_9"/>
<dbReference type="OrthoDB" id="9766564at2"/>
<dbReference type="UniPathway" id="UPA00246"/>
<dbReference type="Proteomes" id="UP000000256">
    <property type="component" value="Chromosome"/>
</dbReference>
<dbReference type="GO" id="GO:0008880">
    <property type="term" value="F:glucuronate isomerase activity"/>
    <property type="evidence" value="ECO:0007669"/>
    <property type="project" value="UniProtKB-UniRule"/>
</dbReference>
<dbReference type="GO" id="GO:0019698">
    <property type="term" value="P:D-galacturonate catabolic process"/>
    <property type="evidence" value="ECO:0007669"/>
    <property type="project" value="TreeGrafter"/>
</dbReference>
<dbReference type="GO" id="GO:0042840">
    <property type="term" value="P:D-glucuronate catabolic process"/>
    <property type="evidence" value="ECO:0007669"/>
    <property type="project" value="TreeGrafter"/>
</dbReference>
<dbReference type="Gene3D" id="3.20.20.140">
    <property type="entry name" value="Metal-dependent hydrolases"/>
    <property type="match status" value="1"/>
</dbReference>
<dbReference type="Gene3D" id="1.10.2020.10">
    <property type="entry name" value="uronate isomerase, domain 2, chain A"/>
    <property type="match status" value="1"/>
</dbReference>
<dbReference type="HAMAP" id="MF_00675">
    <property type="entry name" value="UxaC"/>
    <property type="match status" value="1"/>
</dbReference>
<dbReference type="InterPro" id="IPR032466">
    <property type="entry name" value="Metal_Hydrolase"/>
</dbReference>
<dbReference type="InterPro" id="IPR003766">
    <property type="entry name" value="Uronate_isomerase"/>
</dbReference>
<dbReference type="NCBIfam" id="NF002794">
    <property type="entry name" value="PRK02925.1"/>
    <property type="match status" value="1"/>
</dbReference>
<dbReference type="PANTHER" id="PTHR30068">
    <property type="entry name" value="URONATE ISOMERASE"/>
    <property type="match status" value="1"/>
</dbReference>
<dbReference type="PANTHER" id="PTHR30068:SF4">
    <property type="entry name" value="URONATE ISOMERASE"/>
    <property type="match status" value="1"/>
</dbReference>
<dbReference type="Pfam" id="PF02614">
    <property type="entry name" value="UxaC"/>
    <property type="match status" value="1"/>
</dbReference>
<dbReference type="SUPFAM" id="SSF51556">
    <property type="entry name" value="Metallo-dependent hydrolases"/>
    <property type="match status" value="1"/>
</dbReference>
<keyword id="KW-0413">Isomerase</keyword>
<sequence>MKRFMDEDFLLNNQTAKVLYEKYAKDMPIIDFHCHLNPKEIYENKKFRNITEVWLGGDHYKWRLMRANGIEEKYITGSADDYEKFLAWAKTIPMAIGNPIYHWTHLELKRYFGIDEILNEKSAPIIWEKANKVLEELGARDIILKSNVEVICTTDDPVDTLEYHLKLKDDKNFNVKVYPTFRPDKGVNIERETFIPWVEKLGEVYGKKIESYDEFLDALKSRAEFFHSVGCRASDHAIDNMVFAEASFDEVANIFKKALAGEKLTEIEVAKYKTYTLRFLGKVYSSLGWAMQLHINALRNNNTRMFNILGPDTGYDSINDGHIALALVKFLDSLEKENSLPKTILYSLNPKDNYVLATIMGSFQDGSIPGKMQLGAAWWFNDSKDGNLQQMKDLANLGLLSRFVGMVTDSRSFLSYARHEYFRRLLCKLIGEWVENGEYPYDLEALSRIVQGVCYYNAKEYFGF</sequence>
<accession>A4XKU9</accession>
<organism>
    <name type="scientific">Caldicellulosiruptor saccharolyticus (strain ATCC 43494 / DSM 8903 / Tp8T 6331)</name>
    <dbReference type="NCBI Taxonomy" id="351627"/>
    <lineage>
        <taxon>Bacteria</taxon>
        <taxon>Bacillati</taxon>
        <taxon>Bacillota</taxon>
        <taxon>Bacillota incertae sedis</taxon>
        <taxon>Caldicellulosiruptorales</taxon>
        <taxon>Caldicellulosiruptoraceae</taxon>
        <taxon>Caldicellulosiruptor</taxon>
    </lineage>
</organism>
<comment type="catalytic activity">
    <reaction evidence="1">
        <text>D-glucuronate = D-fructuronate</text>
        <dbReference type="Rhea" id="RHEA:13049"/>
        <dbReference type="ChEBI" id="CHEBI:58720"/>
        <dbReference type="ChEBI" id="CHEBI:59863"/>
        <dbReference type="EC" id="5.3.1.12"/>
    </reaction>
</comment>
<comment type="catalytic activity">
    <reaction evidence="1">
        <text>aldehydo-D-galacturonate = keto-D-tagaturonate</text>
        <dbReference type="Rhea" id="RHEA:27702"/>
        <dbReference type="ChEBI" id="CHEBI:12952"/>
        <dbReference type="ChEBI" id="CHEBI:17886"/>
        <dbReference type="EC" id="5.3.1.12"/>
    </reaction>
</comment>
<comment type="pathway">
    <text evidence="1">Carbohydrate metabolism; pentose and glucuronate interconversion.</text>
</comment>
<comment type="similarity">
    <text evidence="1">Belongs to the metallo-dependent hydrolases superfamily. Uronate isomerase family.</text>
</comment>
<name>UXAC_CALS8</name>
<gene>
    <name evidence="1" type="primary">uxaC</name>
    <name type="ordered locus">Csac_1949</name>
</gene>